<gene>
    <name evidence="4" type="ordered locus">SACE_5812</name>
</gene>
<proteinExistence type="evidence at protein level"/>
<reference key="1">
    <citation type="journal article" date="2007" name="Nat. Biotechnol.">
        <title>Complete genome sequence of the erythromycin-producing bacterium Saccharopolyspora erythraea NRRL23338.</title>
        <authorList>
            <person name="Oliynyk M."/>
            <person name="Samborskyy M."/>
            <person name="Lester J.B."/>
            <person name="Mironenko T."/>
            <person name="Scott N."/>
            <person name="Dickens S."/>
            <person name="Haydock S.F."/>
            <person name="Leadlay P.F."/>
        </authorList>
    </citation>
    <scope>NUCLEOTIDE SEQUENCE [LARGE SCALE GENOMIC DNA]</scope>
    <source>
        <strain>ATCC 11635 / DSM 40517 / JCM 4748 / NBRC 13426 / NCIMB 8594 / NRRL 2338</strain>
    </source>
</reference>
<reference key="2">
    <citation type="journal article" date="2024" name="Microb. Cell Fact.">
        <title>TetR family regulator AbrT controls lincomycin production and morphological development in Streptomyces lincolnensis.</title>
        <authorList>
            <person name="Xu Y."/>
            <person name="Liu M."/>
            <person name="Zhao R."/>
            <person name="Pan Y."/>
            <person name="Wu P."/>
            <person name="Zhang C."/>
            <person name="Chi X."/>
            <person name="Zhang B."/>
            <person name="Wu H."/>
        </authorList>
    </citation>
    <scope>FUNCTION AS A REGULATOR</scope>
    <source>
        <strain>A226</strain>
    </source>
</reference>
<accession>A4FLS1</accession>
<protein>
    <recommendedName>
        <fullName evidence="3">HTH-type transcriptional regulator SACE_5812</fullName>
    </recommendedName>
</protein>
<dbReference type="EMBL" id="AM420293">
    <property type="protein sequence ID" value="CAM04996.1"/>
    <property type="molecule type" value="Genomic_DNA"/>
</dbReference>
<dbReference type="RefSeq" id="WP_009943186.1">
    <property type="nucleotide sequence ID" value="NC_009142.1"/>
</dbReference>
<dbReference type="SMR" id="A4FLS1"/>
<dbReference type="STRING" id="405948.SACE_5812"/>
<dbReference type="KEGG" id="sen:SACE_5812"/>
<dbReference type="eggNOG" id="COG1309">
    <property type="taxonomic scope" value="Bacteria"/>
</dbReference>
<dbReference type="HOGENOM" id="CLU_069543_3_1_11"/>
<dbReference type="OrthoDB" id="3214072at2"/>
<dbReference type="Proteomes" id="UP000006728">
    <property type="component" value="Chromosome"/>
</dbReference>
<dbReference type="GO" id="GO:0003700">
    <property type="term" value="F:DNA-binding transcription factor activity"/>
    <property type="evidence" value="ECO:0007669"/>
    <property type="project" value="TreeGrafter"/>
</dbReference>
<dbReference type="GO" id="GO:0000976">
    <property type="term" value="F:transcription cis-regulatory region binding"/>
    <property type="evidence" value="ECO:0007669"/>
    <property type="project" value="TreeGrafter"/>
</dbReference>
<dbReference type="GO" id="GO:0045892">
    <property type="term" value="P:negative regulation of DNA-templated transcription"/>
    <property type="evidence" value="ECO:0007669"/>
    <property type="project" value="InterPro"/>
</dbReference>
<dbReference type="GO" id="GO:0046677">
    <property type="term" value="P:response to antibiotic"/>
    <property type="evidence" value="ECO:0007669"/>
    <property type="project" value="InterPro"/>
</dbReference>
<dbReference type="Gene3D" id="1.10.10.60">
    <property type="entry name" value="Homeodomain-like"/>
    <property type="match status" value="1"/>
</dbReference>
<dbReference type="Gene3D" id="1.10.357.10">
    <property type="entry name" value="Tetracycline Repressor, domain 2"/>
    <property type="match status" value="1"/>
</dbReference>
<dbReference type="InterPro" id="IPR023772">
    <property type="entry name" value="DNA-bd_HTH_TetR-type_CS"/>
</dbReference>
<dbReference type="InterPro" id="IPR009057">
    <property type="entry name" value="Homeodomain-like_sf"/>
</dbReference>
<dbReference type="InterPro" id="IPR050109">
    <property type="entry name" value="HTH-type_TetR-like_transc_reg"/>
</dbReference>
<dbReference type="InterPro" id="IPR001647">
    <property type="entry name" value="HTH_TetR"/>
</dbReference>
<dbReference type="InterPro" id="IPR004111">
    <property type="entry name" value="Repressor_TetR_C"/>
</dbReference>
<dbReference type="InterPro" id="IPR003012">
    <property type="entry name" value="Tet_transcr_reg_TetR"/>
</dbReference>
<dbReference type="InterPro" id="IPR036271">
    <property type="entry name" value="Tet_transcr_reg_TetR-rel_C_sf"/>
</dbReference>
<dbReference type="PANTHER" id="PTHR30055">
    <property type="entry name" value="HTH-TYPE TRANSCRIPTIONAL REGULATOR RUTR"/>
    <property type="match status" value="1"/>
</dbReference>
<dbReference type="PANTHER" id="PTHR30055:SF151">
    <property type="entry name" value="TRANSCRIPTIONAL REGULATORY PROTEIN"/>
    <property type="match status" value="1"/>
</dbReference>
<dbReference type="Pfam" id="PF02909">
    <property type="entry name" value="TetR_C_1"/>
    <property type="match status" value="1"/>
</dbReference>
<dbReference type="Pfam" id="PF00440">
    <property type="entry name" value="TetR_N"/>
    <property type="match status" value="1"/>
</dbReference>
<dbReference type="PRINTS" id="PR00400">
    <property type="entry name" value="TETREPRESSOR"/>
</dbReference>
<dbReference type="SUPFAM" id="SSF46689">
    <property type="entry name" value="Homeodomain-like"/>
    <property type="match status" value="1"/>
</dbReference>
<dbReference type="SUPFAM" id="SSF48498">
    <property type="entry name" value="Tetracyclin repressor-like, C-terminal domain"/>
    <property type="match status" value="1"/>
</dbReference>
<dbReference type="PROSITE" id="PS01081">
    <property type="entry name" value="HTH_TETR_1"/>
    <property type="match status" value="1"/>
</dbReference>
<dbReference type="PROSITE" id="PS50977">
    <property type="entry name" value="HTH_TETR_2"/>
    <property type="match status" value="1"/>
</dbReference>
<name>ABRTH_SACEN</name>
<organism>
    <name type="scientific">Saccharopolyspora erythraea (strain ATCC 11635 / DSM 40517 / JCM 4748 / NBRC 13426 / NCIMB 8594 / NRRL 2338)</name>
    <dbReference type="NCBI Taxonomy" id="405948"/>
    <lineage>
        <taxon>Bacteria</taxon>
        <taxon>Bacillati</taxon>
        <taxon>Actinomycetota</taxon>
        <taxon>Actinomycetes</taxon>
        <taxon>Pseudonocardiales</taxon>
        <taxon>Pseudonocardiaceae</taxon>
        <taxon>Saccharopolyspora</taxon>
    </lineage>
</organism>
<keyword id="KW-0238">DNA-binding</keyword>
<keyword id="KW-1185">Reference proteome</keyword>
<keyword id="KW-0678">Repressor</keyword>
<keyword id="KW-0804">Transcription</keyword>
<keyword id="KW-0805">Transcription regulation</keyword>
<evidence type="ECO:0000255" key="1">
    <source>
        <dbReference type="PROSITE-ProRule" id="PRU00335"/>
    </source>
</evidence>
<evidence type="ECO:0000269" key="2">
    <source>
    </source>
</evidence>
<evidence type="ECO:0000305" key="3"/>
<evidence type="ECO:0000312" key="4">
    <source>
        <dbReference type="EMBL" id="CAM04996.1"/>
    </source>
</evidence>
<feature type="chain" id="PRO_0000461505" description="HTH-type transcriptional regulator SACE_5812">
    <location>
        <begin position="1"/>
        <end position="236"/>
    </location>
</feature>
<feature type="domain" description="HTH tetR-type" evidence="1">
    <location>
        <begin position="30"/>
        <end position="90"/>
    </location>
</feature>
<feature type="DNA-binding region" description="H-T-H motif" evidence="1">
    <location>
        <begin position="53"/>
        <end position="72"/>
    </location>
</feature>
<sequence>MTAKSKTSTSEGAPGAVWFRPEKQSRTKPLLTQDKIVSAAVELLDRDGVRQLSMRKLADRLQAHATSLYWHVSTKDDVLDLALDAVFGEVRLPVESGPSWRDDIIAFMAELRRVLLDHPWAAALASTRPLAGPNALARSEFVYAALAAAGFGRADVLAAGAAVSNYVIGSVSAESVWRHQDEAGTRSALAEHLRAREADYPALAGNFPADGGDWQAHFDRGAQYLVAGMAATAGLE</sequence>
<comment type="function">
    <text evidence="2">Transcriptional regulator that inhibits erythromycin production (PubMed:39118116). Directly represses the expression of SACE_5813, eryAI (encoding polyketide synthase I) and ermE (encoding rRNA methyltransferase), suggesting its direct regulation of the erythromycin biosynthesis gene cluster (PubMed:39118116). May play an important role in regulating secondary metabolism in actinomycetes (PubMed:39118116).</text>
</comment>